<sequence>MLQIKNLSKSFPNPYGEPNTIFENLSIDIEDGEFVSIIGSNGTGKSTLLNIISGLIKESSGQITLDSTTITNLAEYKRTQIVSRVFQDPSLGTCPSMTVRENLSLALNKGKLLNLKKCLRHKTNNLEHLLEGISLDLKKYLDIKVQYLSGGQRQSLSLIMSSLASPKVLLLDEHTAALDPKTSNEVIELTDKIVREKNITTLMVTHNLKHALQYGDRLIMLHKGEVVLDVKDKEKENLTVEEILEKFEYAV</sequence>
<protein>
    <recommendedName>
        <fullName evidence="3">Tyrosine transport ATP-binding protein</fullName>
        <ecNumber evidence="4">7.4.2.13</ecNumber>
    </recommendedName>
</protein>
<reference key="1">
    <citation type="journal article" date="2009" name="Genome Biol.">
        <title>Comparative genome and phenotypic analysis of Clostridium difficile 027 strains provides insight into the evolution of a hypervirulent bacterium.</title>
        <authorList>
            <person name="Stabler R.A."/>
            <person name="He M."/>
            <person name="Dawson L."/>
            <person name="Martin M."/>
            <person name="Valiente E."/>
            <person name="Corton C."/>
            <person name="Lawley T.D."/>
            <person name="Sebaihia M."/>
            <person name="Quail M.A."/>
            <person name="Rose G."/>
            <person name="Gerding D.N."/>
            <person name="Gibert M."/>
            <person name="Popoff M.R."/>
            <person name="Parkhill J."/>
            <person name="Dougan G."/>
            <person name="Wren B.W."/>
        </authorList>
    </citation>
    <scope>NUCLEOTIDE SEQUENCE [LARGE SCALE GENOMIC DNA]</scope>
    <source>
        <strain>R20291</strain>
    </source>
</reference>
<reference key="2">
    <citation type="journal article" date="2018" name="Front. Microbiol.">
        <title>Convergent loss of ABC transporter genes from Clostridioides difficile genomes is associated with impaired tyrosine uptake and p-cresol production.</title>
        <authorList>
            <person name="Steglich M."/>
            <person name="Hofmann J.D."/>
            <person name="Helmecke J."/>
            <person name="Sikorski J."/>
            <person name="Sproeer C."/>
            <person name="Riedel T."/>
            <person name="Bunk B."/>
            <person name="Overmann J."/>
            <person name="Neumann-Schaal M."/>
            <person name="Nuebel U."/>
        </authorList>
    </citation>
    <scope>FUNCTION</scope>
    <scope>DISRUPTION PHENOTYPE</scope>
</reference>
<organism>
    <name type="scientific">Clostridioides difficile (strain R20291)</name>
    <name type="common">Peptoclostridium difficile</name>
    <dbReference type="NCBI Taxonomy" id="645463"/>
    <lineage>
        <taxon>Bacteria</taxon>
        <taxon>Bacillati</taxon>
        <taxon>Bacillota</taxon>
        <taxon>Clostridia</taxon>
        <taxon>Peptostreptococcales</taxon>
        <taxon>Peptostreptococcaceae</taxon>
        <taxon>Clostridioides</taxon>
    </lineage>
</organism>
<keyword id="KW-0029">Amino-acid transport</keyword>
<keyword id="KW-0067">ATP-binding</keyword>
<keyword id="KW-1003">Cell membrane</keyword>
<keyword id="KW-0472">Membrane</keyword>
<keyword id="KW-0547">Nucleotide-binding</keyword>
<keyword id="KW-1278">Translocase</keyword>
<keyword id="KW-0813">Transport</keyword>
<comment type="function">
    <text evidence="2 3">Probably part of an ABC transporter complex involved in tyrosine uptake (PubMed:29867812). May also import phenylalanine (PubMed:29867812). Probably responsible for energy coupling to the transport system (Probable).</text>
</comment>
<comment type="catalytic activity">
    <reaction evidence="4">
        <text>L-tyrosine(out) + ATP + H2O = L-tyrosine(in) + ADP + phosphate + H(+)</text>
        <dbReference type="Rhea" id="RHEA:62584"/>
        <dbReference type="ChEBI" id="CHEBI:15377"/>
        <dbReference type="ChEBI" id="CHEBI:15378"/>
        <dbReference type="ChEBI" id="CHEBI:30616"/>
        <dbReference type="ChEBI" id="CHEBI:43474"/>
        <dbReference type="ChEBI" id="CHEBI:58315"/>
        <dbReference type="ChEBI" id="CHEBI:456216"/>
        <dbReference type="EC" id="7.4.2.13"/>
    </reaction>
</comment>
<comment type="subunit">
    <text evidence="4">The complex is probably composed of two ATP-binding proteins (CDR20291_0806), two transmembrane proteins (CDR20291_0807) and a solute-binding protein (CDR20291_0805).</text>
</comment>
<comment type="subcellular location">
    <subcellularLocation>
        <location evidence="3">Cell membrane</location>
        <topology evidence="3">Peripheral membrane protein</topology>
    </subcellularLocation>
</comment>
<comment type="disruption phenotype">
    <text evidence="2">C.difficile isolates lacking CDR20291_0805 and CDR20291_0806 show reduced uptake of tyrosine (PubMed:29867812). Production of the tyrosine catabolic end product p-cresol is decreased by sixfold, and the intermediate fermentation product (4-hydroxyphenyl)acetate is not detectable at all (PubMed:29867812).</text>
</comment>
<comment type="similarity">
    <text evidence="3">Belongs to the ABC transporter superfamily.</text>
</comment>
<dbReference type="EC" id="7.4.2.13" evidence="4"/>
<dbReference type="EMBL" id="FN545816">
    <property type="protein sequence ID" value="CBE02868.1"/>
    <property type="molecule type" value="Genomic_DNA"/>
</dbReference>
<dbReference type="RefSeq" id="WP_009888699.1">
    <property type="nucleotide sequence ID" value="NZ_CP115183.1"/>
</dbReference>
<dbReference type="SMR" id="P0DX43"/>
<dbReference type="KEGG" id="cdl:CDR20291_0806"/>
<dbReference type="Proteomes" id="UP000002070">
    <property type="component" value="Chromosome"/>
</dbReference>
<dbReference type="GO" id="GO:0005886">
    <property type="term" value="C:plasma membrane"/>
    <property type="evidence" value="ECO:0007669"/>
    <property type="project" value="UniProtKB-SubCell"/>
</dbReference>
<dbReference type="GO" id="GO:0005524">
    <property type="term" value="F:ATP binding"/>
    <property type="evidence" value="ECO:0007669"/>
    <property type="project" value="UniProtKB-KW"/>
</dbReference>
<dbReference type="GO" id="GO:0016887">
    <property type="term" value="F:ATP hydrolysis activity"/>
    <property type="evidence" value="ECO:0007669"/>
    <property type="project" value="InterPro"/>
</dbReference>
<dbReference type="GO" id="GO:0006865">
    <property type="term" value="P:amino acid transport"/>
    <property type="evidence" value="ECO:0007669"/>
    <property type="project" value="UniProtKB-KW"/>
</dbReference>
<dbReference type="Gene3D" id="3.40.50.300">
    <property type="entry name" value="P-loop containing nucleotide triphosphate hydrolases"/>
    <property type="match status" value="1"/>
</dbReference>
<dbReference type="InterPro" id="IPR003593">
    <property type="entry name" value="AAA+_ATPase"/>
</dbReference>
<dbReference type="InterPro" id="IPR003439">
    <property type="entry name" value="ABC_transporter-like_ATP-bd"/>
</dbReference>
<dbReference type="InterPro" id="IPR050166">
    <property type="entry name" value="ABC_transporter_ATP-bind"/>
</dbReference>
<dbReference type="InterPro" id="IPR027417">
    <property type="entry name" value="P-loop_NTPase"/>
</dbReference>
<dbReference type="PANTHER" id="PTHR42788:SF7">
    <property type="entry name" value="NITRATE ABC TRANSPORTER ATP-BINDING PROTEIN"/>
    <property type="match status" value="1"/>
</dbReference>
<dbReference type="PANTHER" id="PTHR42788">
    <property type="entry name" value="TAURINE IMPORT ATP-BINDING PROTEIN-RELATED"/>
    <property type="match status" value="1"/>
</dbReference>
<dbReference type="Pfam" id="PF00005">
    <property type="entry name" value="ABC_tran"/>
    <property type="match status" value="1"/>
</dbReference>
<dbReference type="SMART" id="SM00382">
    <property type="entry name" value="AAA"/>
    <property type="match status" value="1"/>
</dbReference>
<dbReference type="SUPFAM" id="SSF52540">
    <property type="entry name" value="P-loop containing nucleoside triphosphate hydrolases"/>
    <property type="match status" value="1"/>
</dbReference>
<dbReference type="PROSITE" id="PS50893">
    <property type="entry name" value="ABC_TRANSPORTER_2"/>
    <property type="match status" value="1"/>
</dbReference>
<gene>
    <name evidence="5" type="ordered locus">CDR20291_0806</name>
</gene>
<feature type="chain" id="PRO_0000458885" description="Tyrosine transport ATP-binding protein">
    <location>
        <begin position="1"/>
        <end position="251"/>
    </location>
</feature>
<feature type="domain" description="ABC transporter" evidence="1">
    <location>
        <begin position="2"/>
        <end position="248"/>
    </location>
</feature>
<feature type="binding site" evidence="1">
    <location>
        <begin position="39"/>
        <end position="46"/>
    </location>
    <ligand>
        <name>ATP</name>
        <dbReference type="ChEBI" id="CHEBI:30616"/>
    </ligand>
</feature>
<name>TYRAP_CLODR</name>
<evidence type="ECO:0000255" key="1">
    <source>
        <dbReference type="PROSITE-ProRule" id="PRU00434"/>
    </source>
</evidence>
<evidence type="ECO:0000269" key="2">
    <source>
    </source>
</evidence>
<evidence type="ECO:0000305" key="3"/>
<evidence type="ECO:0000305" key="4">
    <source>
    </source>
</evidence>
<evidence type="ECO:0000312" key="5">
    <source>
        <dbReference type="EMBL" id="CBE02868.1"/>
    </source>
</evidence>
<accession>P0DX43</accession>
<accession>A0A9R0BIW3</accession>
<proteinExistence type="inferred from homology"/>